<sequence length="568" mass="63087">MSVSVFNRCWSKVILETLVRQGVSHVCIAPGSRSTPLTLEAVRLQNAGSVTCHTHFDERGLGFFALGIAKATQSPVAIIVTSGTATANLYPAIIEARQTGVNLFVLTADRPPELWECGANQAILQQNMFGQYPVANVNLPKPNADYSAQWLISLLEQAAFQQKQQGGVVHINVPFTEPLYDATDEEVNSHSWLQPLQRWLIQNKSWINVEVQQNEVLMHENWDHWRTKRGVVVVGQLPAEQAMGINSWASAMGWVLLTDIQSGVVPTTPYEDIWLANQTVREKLLQADIVIQFGARFISKRINQFLQAFKGEFWLVEQSGKALDPYHHSLTRFNAKAHHWLRAHPPLRQKPWLLEPLALSKFCATFIEQQVGGNLTEASLALRLPTLLPYNGVLFLGNSLLVRLVDALTQLPESYPVYTNRGASGIDGLLATAAGIGIGSNKPVVAVIGDTSTLYDLNSFALFKNVTQPTLIFVINNNGGAIFDMLPVDEQVKDQFYRLPHNGDFSQIAAMFDLKYAHPYTWADLNSVVKQAYSRRKATLIEIKTNPSDGSSLYKRLIDQISHAVIGA</sequence>
<organism>
    <name type="scientific">Haemophilus influenzae (strain 86-028NP)</name>
    <dbReference type="NCBI Taxonomy" id="281310"/>
    <lineage>
        <taxon>Bacteria</taxon>
        <taxon>Pseudomonadati</taxon>
        <taxon>Pseudomonadota</taxon>
        <taxon>Gammaproteobacteria</taxon>
        <taxon>Pasteurellales</taxon>
        <taxon>Pasteurellaceae</taxon>
        <taxon>Haemophilus</taxon>
    </lineage>
</organism>
<reference key="1">
    <citation type="journal article" date="2005" name="J. Bacteriol.">
        <title>Genomic sequence of an otitis media isolate of nontypeable Haemophilus influenzae: comparative study with H. influenzae serotype d, strain KW20.</title>
        <authorList>
            <person name="Harrison A."/>
            <person name="Dyer D.W."/>
            <person name="Gillaspy A."/>
            <person name="Ray W.C."/>
            <person name="Mungur R."/>
            <person name="Carson M.B."/>
            <person name="Zhong H."/>
            <person name="Gipson J."/>
            <person name="Gipson M."/>
            <person name="Johnson L.S."/>
            <person name="Lewis L."/>
            <person name="Bakaletz L.O."/>
            <person name="Munson R.S. Jr."/>
        </authorList>
    </citation>
    <scope>NUCLEOTIDE SEQUENCE [LARGE SCALE GENOMIC DNA]</scope>
    <source>
        <strain>86-028NP</strain>
    </source>
</reference>
<comment type="function">
    <text evidence="1">Catalyzes the thiamine diphosphate-dependent decarboxylation of 2-oxoglutarate and the subsequent addition of the resulting succinic semialdehyde-thiamine pyrophosphate anion to isochorismate to yield 2-succinyl-5-enolpyruvyl-6-hydroxy-3-cyclohexene-1-carboxylate (SEPHCHC).</text>
</comment>
<comment type="catalytic activity">
    <reaction evidence="1">
        <text>isochorismate + 2-oxoglutarate + H(+) = 5-enolpyruvoyl-6-hydroxy-2-succinyl-cyclohex-3-ene-1-carboxylate + CO2</text>
        <dbReference type="Rhea" id="RHEA:25593"/>
        <dbReference type="ChEBI" id="CHEBI:15378"/>
        <dbReference type="ChEBI" id="CHEBI:16526"/>
        <dbReference type="ChEBI" id="CHEBI:16810"/>
        <dbReference type="ChEBI" id="CHEBI:29780"/>
        <dbReference type="ChEBI" id="CHEBI:58818"/>
        <dbReference type="EC" id="2.2.1.9"/>
    </reaction>
</comment>
<comment type="cofactor">
    <cofactor evidence="1">
        <name>Mg(2+)</name>
        <dbReference type="ChEBI" id="CHEBI:18420"/>
    </cofactor>
    <cofactor evidence="1">
        <name>Mn(2+)</name>
        <dbReference type="ChEBI" id="CHEBI:29035"/>
    </cofactor>
</comment>
<comment type="cofactor">
    <cofactor evidence="1">
        <name>thiamine diphosphate</name>
        <dbReference type="ChEBI" id="CHEBI:58937"/>
    </cofactor>
    <text evidence="1">Binds 1 thiamine pyrophosphate per subunit.</text>
</comment>
<comment type="pathway">
    <text evidence="1">Quinol/quinone metabolism; 1,4-dihydroxy-2-naphthoate biosynthesis; 1,4-dihydroxy-2-naphthoate from chorismate: step 2/7.</text>
</comment>
<comment type="pathway">
    <text evidence="1">Quinol/quinone metabolism; menaquinone biosynthesis.</text>
</comment>
<comment type="subunit">
    <text evidence="1">Homodimer.</text>
</comment>
<comment type="similarity">
    <text evidence="1">Belongs to the TPP enzyme family. MenD subfamily.</text>
</comment>
<keyword id="KW-0460">Magnesium</keyword>
<keyword id="KW-0464">Manganese</keyword>
<keyword id="KW-0474">Menaquinone biosynthesis</keyword>
<keyword id="KW-0479">Metal-binding</keyword>
<keyword id="KW-0786">Thiamine pyrophosphate</keyword>
<keyword id="KW-0808">Transferase</keyword>
<accession>Q4QNQ7</accession>
<gene>
    <name evidence="1" type="primary">menD</name>
    <name type="ordered locus">NTHI0392</name>
</gene>
<name>MEND_HAEI8</name>
<feature type="chain" id="PRO_0000341753" description="2-succinyl-5-enolpyruvyl-6-hydroxy-3-cyclohexene-1-carboxylate synthase">
    <location>
        <begin position="1"/>
        <end position="568"/>
    </location>
</feature>
<protein>
    <recommendedName>
        <fullName evidence="1">2-succinyl-5-enolpyruvyl-6-hydroxy-3-cyclohexene-1-carboxylate synthase</fullName>
        <shortName evidence="1">SEPHCHC synthase</shortName>
        <ecNumber evidence="1">2.2.1.9</ecNumber>
    </recommendedName>
    <alternativeName>
        <fullName evidence="1">Menaquinone biosynthesis protein MenD</fullName>
    </alternativeName>
</protein>
<dbReference type="EC" id="2.2.1.9" evidence="1"/>
<dbReference type="EMBL" id="CP000057">
    <property type="protein sequence ID" value="AAX87340.1"/>
    <property type="molecule type" value="Genomic_DNA"/>
</dbReference>
<dbReference type="RefSeq" id="WP_011271963.1">
    <property type="nucleotide sequence ID" value="NC_007146.2"/>
</dbReference>
<dbReference type="SMR" id="Q4QNQ7"/>
<dbReference type="GeneID" id="93219229"/>
<dbReference type="KEGG" id="hit:NTHI0392"/>
<dbReference type="HOGENOM" id="CLU_006051_3_0_6"/>
<dbReference type="UniPathway" id="UPA00079"/>
<dbReference type="UniPathway" id="UPA01057">
    <property type="reaction ID" value="UER00164"/>
</dbReference>
<dbReference type="Proteomes" id="UP000002525">
    <property type="component" value="Chromosome"/>
</dbReference>
<dbReference type="GO" id="GO:0070204">
    <property type="term" value="F:2-succinyl-5-enolpyruvyl-6-hydroxy-3-cyclohexene-1-carboxylic-acid synthase activity"/>
    <property type="evidence" value="ECO:0007669"/>
    <property type="project" value="UniProtKB-UniRule"/>
</dbReference>
<dbReference type="GO" id="GO:0000287">
    <property type="term" value="F:magnesium ion binding"/>
    <property type="evidence" value="ECO:0007669"/>
    <property type="project" value="UniProtKB-UniRule"/>
</dbReference>
<dbReference type="GO" id="GO:0030145">
    <property type="term" value="F:manganese ion binding"/>
    <property type="evidence" value="ECO:0007669"/>
    <property type="project" value="UniProtKB-UniRule"/>
</dbReference>
<dbReference type="GO" id="GO:0030976">
    <property type="term" value="F:thiamine pyrophosphate binding"/>
    <property type="evidence" value="ECO:0007669"/>
    <property type="project" value="UniProtKB-UniRule"/>
</dbReference>
<dbReference type="GO" id="GO:0009234">
    <property type="term" value="P:menaquinone biosynthetic process"/>
    <property type="evidence" value="ECO:0007669"/>
    <property type="project" value="UniProtKB-UniRule"/>
</dbReference>
<dbReference type="CDD" id="cd07037">
    <property type="entry name" value="TPP_PYR_MenD"/>
    <property type="match status" value="1"/>
</dbReference>
<dbReference type="CDD" id="cd02009">
    <property type="entry name" value="TPP_SHCHC_synthase"/>
    <property type="match status" value="1"/>
</dbReference>
<dbReference type="Gene3D" id="3.40.50.970">
    <property type="match status" value="2"/>
</dbReference>
<dbReference type="Gene3D" id="3.40.50.1220">
    <property type="entry name" value="TPP-binding domain"/>
    <property type="match status" value="1"/>
</dbReference>
<dbReference type="HAMAP" id="MF_01659">
    <property type="entry name" value="MenD"/>
    <property type="match status" value="1"/>
</dbReference>
<dbReference type="InterPro" id="IPR004433">
    <property type="entry name" value="MenaQ_synth_MenD"/>
</dbReference>
<dbReference type="InterPro" id="IPR032264">
    <property type="entry name" value="MenD_middle"/>
</dbReference>
<dbReference type="InterPro" id="IPR029061">
    <property type="entry name" value="THDP-binding"/>
</dbReference>
<dbReference type="InterPro" id="IPR012001">
    <property type="entry name" value="Thiamin_PyroP_enz_TPP-bd_dom"/>
</dbReference>
<dbReference type="InterPro" id="IPR011766">
    <property type="entry name" value="TPP_enzyme_TPP-bd"/>
</dbReference>
<dbReference type="NCBIfam" id="TIGR00173">
    <property type="entry name" value="menD"/>
    <property type="match status" value="1"/>
</dbReference>
<dbReference type="PANTHER" id="PTHR42916">
    <property type="entry name" value="2-SUCCINYL-5-ENOLPYRUVYL-6-HYDROXY-3-CYCLOHEXENE-1-CARBOXYLATE SYNTHASE"/>
    <property type="match status" value="1"/>
</dbReference>
<dbReference type="PANTHER" id="PTHR42916:SF1">
    <property type="entry name" value="PROTEIN PHYLLO, CHLOROPLASTIC"/>
    <property type="match status" value="1"/>
</dbReference>
<dbReference type="Pfam" id="PF02775">
    <property type="entry name" value="TPP_enzyme_C"/>
    <property type="match status" value="1"/>
</dbReference>
<dbReference type="Pfam" id="PF16582">
    <property type="entry name" value="TPP_enzyme_M_2"/>
    <property type="match status" value="1"/>
</dbReference>
<dbReference type="Pfam" id="PF02776">
    <property type="entry name" value="TPP_enzyme_N"/>
    <property type="match status" value="1"/>
</dbReference>
<dbReference type="PIRSF" id="PIRSF004983">
    <property type="entry name" value="MenD"/>
    <property type="match status" value="1"/>
</dbReference>
<dbReference type="SUPFAM" id="SSF52518">
    <property type="entry name" value="Thiamin diphosphate-binding fold (THDP-binding)"/>
    <property type="match status" value="2"/>
</dbReference>
<evidence type="ECO:0000255" key="1">
    <source>
        <dbReference type="HAMAP-Rule" id="MF_01659"/>
    </source>
</evidence>
<proteinExistence type="inferred from homology"/>